<keyword id="KW-1185">Reference proteome</keyword>
<keyword id="KW-0687">Ribonucleoprotein</keyword>
<keyword id="KW-0689">Ribosomal protein</keyword>
<keyword id="KW-0694">RNA-binding</keyword>
<keyword id="KW-0699">rRNA-binding</keyword>
<keyword id="KW-0820">tRNA-binding</keyword>
<comment type="function">
    <text evidence="1">Binds 23S rRNA and is also seen to make contacts with the A and possibly P site tRNAs.</text>
</comment>
<comment type="subunit">
    <text evidence="1">Part of the 50S ribosomal subunit.</text>
</comment>
<comment type="similarity">
    <text evidence="1">Belongs to the universal ribosomal protein uL16 family.</text>
</comment>
<sequence length="136" mass="15409">MLQPKRTKFRKMFKGRNRGLANGTEVSFGDFGLKAVGRGRLTARQIEAARRAMTRHIKRQGQIWIRVFPDKPITSKPLEVRMGKGKGNVEYWVCQIQPGKVLYEMDGVTEELAREAFALAAAKLPLKTTFVTKTVM</sequence>
<reference key="1">
    <citation type="submission" date="2007-08" db="EMBL/GenBank/DDBJ databases">
        <title>Complete sequence of Shewanella sediminis HAW-EB3.</title>
        <authorList>
            <consortium name="US DOE Joint Genome Institute"/>
            <person name="Copeland A."/>
            <person name="Lucas S."/>
            <person name="Lapidus A."/>
            <person name="Barry K."/>
            <person name="Glavina del Rio T."/>
            <person name="Dalin E."/>
            <person name="Tice H."/>
            <person name="Pitluck S."/>
            <person name="Chertkov O."/>
            <person name="Brettin T."/>
            <person name="Bruce D."/>
            <person name="Detter J.C."/>
            <person name="Han C."/>
            <person name="Schmutz J."/>
            <person name="Larimer F."/>
            <person name="Land M."/>
            <person name="Hauser L."/>
            <person name="Kyrpides N."/>
            <person name="Kim E."/>
            <person name="Zhao J.-S."/>
            <person name="Richardson P."/>
        </authorList>
    </citation>
    <scope>NUCLEOTIDE SEQUENCE [LARGE SCALE GENOMIC DNA]</scope>
    <source>
        <strain>HAW-EB3</strain>
    </source>
</reference>
<proteinExistence type="inferred from homology"/>
<gene>
    <name evidence="1" type="primary">rplP</name>
    <name type="ordered locus">Ssed_4310</name>
</gene>
<accession>A8G1E1</accession>
<organism>
    <name type="scientific">Shewanella sediminis (strain HAW-EB3)</name>
    <dbReference type="NCBI Taxonomy" id="425104"/>
    <lineage>
        <taxon>Bacteria</taxon>
        <taxon>Pseudomonadati</taxon>
        <taxon>Pseudomonadota</taxon>
        <taxon>Gammaproteobacteria</taxon>
        <taxon>Alteromonadales</taxon>
        <taxon>Shewanellaceae</taxon>
        <taxon>Shewanella</taxon>
    </lineage>
</organism>
<protein>
    <recommendedName>
        <fullName evidence="1">Large ribosomal subunit protein uL16</fullName>
    </recommendedName>
    <alternativeName>
        <fullName evidence="2">50S ribosomal protein L16</fullName>
    </alternativeName>
</protein>
<feature type="chain" id="PRO_1000086779" description="Large ribosomal subunit protein uL16">
    <location>
        <begin position="1"/>
        <end position="136"/>
    </location>
</feature>
<name>RL16_SHESH</name>
<dbReference type="EMBL" id="CP000821">
    <property type="protein sequence ID" value="ABV38914.1"/>
    <property type="molecule type" value="Genomic_DNA"/>
</dbReference>
<dbReference type="RefSeq" id="WP_012144643.1">
    <property type="nucleotide sequence ID" value="NC_009831.1"/>
</dbReference>
<dbReference type="SMR" id="A8G1E1"/>
<dbReference type="STRING" id="425104.Ssed_4310"/>
<dbReference type="KEGG" id="sse:Ssed_4310"/>
<dbReference type="eggNOG" id="COG0197">
    <property type="taxonomic scope" value="Bacteria"/>
</dbReference>
<dbReference type="HOGENOM" id="CLU_078858_2_1_6"/>
<dbReference type="OrthoDB" id="9802589at2"/>
<dbReference type="Proteomes" id="UP000002015">
    <property type="component" value="Chromosome"/>
</dbReference>
<dbReference type="GO" id="GO:0022625">
    <property type="term" value="C:cytosolic large ribosomal subunit"/>
    <property type="evidence" value="ECO:0007669"/>
    <property type="project" value="TreeGrafter"/>
</dbReference>
<dbReference type="GO" id="GO:0019843">
    <property type="term" value="F:rRNA binding"/>
    <property type="evidence" value="ECO:0007669"/>
    <property type="project" value="UniProtKB-UniRule"/>
</dbReference>
<dbReference type="GO" id="GO:0003735">
    <property type="term" value="F:structural constituent of ribosome"/>
    <property type="evidence" value="ECO:0007669"/>
    <property type="project" value="InterPro"/>
</dbReference>
<dbReference type="GO" id="GO:0000049">
    <property type="term" value="F:tRNA binding"/>
    <property type="evidence" value="ECO:0007669"/>
    <property type="project" value="UniProtKB-KW"/>
</dbReference>
<dbReference type="GO" id="GO:0006412">
    <property type="term" value="P:translation"/>
    <property type="evidence" value="ECO:0007669"/>
    <property type="project" value="UniProtKB-UniRule"/>
</dbReference>
<dbReference type="CDD" id="cd01433">
    <property type="entry name" value="Ribosomal_L16_L10e"/>
    <property type="match status" value="1"/>
</dbReference>
<dbReference type="FunFam" id="3.90.1170.10:FF:000001">
    <property type="entry name" value="50S ribosomal protein L16"/>
    <property type="match status" value="1"/>
</dbReference>
<dbReference type="Gene3D" id="3.90.1170.10">
    <property type="entry name" value="Ribosomal protein L10e/L16"/>
    <property type="match status" value="1"/>
</dbReference>
<dbReference type="HAMAP" id="MF_01342">
    <property type="entry name" value="Ribosomal_uL16"/>
    <property type="match status" value="1"/>
</dbReference>
<dbReference type="InterPro" id="IPR047873">
    <property type="entry name" value="Ribosomal_uL16"/>
</dbReference>
<dbReference type="InterPro" id="IPR000114">
    <property type="entry name" value="Ribosomal_uL16_bact-type"/>
</dbReference>
<dbReference type="InterPro" id="IPR020798">
    <property type="entry name" value="Ribosomal_uL16_CS"/>
</dbReference>
<dbReference type="InterPro" id="IPR016180">
    <property type="entry name" value="Ribosomal_uL16_dom"/>
</dbReference>
<dbReference type="InterPro" id="IPR036920">
    <property type="entry name" value="Ribosomal_uL16_sf"/>
</dbReference>
<dbReference type="NCBIfam" id="TIGR01164">
    <property type="entry name" value="rplP_bact"/>
    <property type="match status" value="1"/>
</dbReference>
<dbReference type="PANTHER" id="PTHR12220">
    <property type="entry name" value="50S/60S RIBOSOMAL PROTEIN L16"/>
    <property type="match status" value="1"/>
</dbReference>
<dbReference type="PANTHER" id="PTHR12220:SF13">
    <property type="entry name" value="LARGE RIBOSOMAL SUBUNIT PROTEIN UL16M"/>
    <property type="match status" value="1"/>
</dbReference>
<dbReference type="Pfam" id="PF00252">
    <property type="entry name" value="Ribosomal_L16"/>
    <property type="match status" value="1"/>
</dbReference>
<dbReference type="PRINTS" id="PR00060">
    <property type="entry name" value="RIBOSOMALL16"/>
</dbReference>
<dbReference type="SUPFAM" id="SSF54686">
    <property type="entry name" value="Ribosomal protein L16p/L10e"/>
    <property type="match status" value="1"/>
</dbReference>
<dbReference type="PROSITE" id="PS00586">
    <property type="entry name" value="RIBOSOMAL_L16_1"/>
    <property type="match status" value="1"/>
</dbReference>
<dbReference type="PROSITE" id="PS00701">
    <property type="entry name" value="RIBOSOMAL_L16_2"/>
    <property type="match status" value="1"/>
</dbReference>
<evidence type="ECO:0000255" key="1">
    <source>
        <dbReference type="HAMAP-Rule" id="MF_01342"/>
    </source>
</evidence>
<evidence type="ECO:0000305" key="2"/>